<dbReference type="EMBL" id="AAFW02000152">
    <property type="protein sequence ID" value="EDN59913.1"/>
    <property type="status" value="ALT_SEQ"/>
    <property type="molecule type" value="Genomic_DNA"/>
</dbReference>
<dbReference type="HOGENOM" id="CLU_518965_0_0_1"/>
<dbReference type="OrthoDB" id="24842at4893"/>
<dbReference type="Proteomes" id="UP000007060">
    <property type="component" value="Unassembled WGS sequence"/>
</dbReference>
<dbReference type="GO" id="GO:0016020">
    <property type="term" value="C:membrane"/>
    <property type="evidence" value="ECO:0007669"/>
    <property type="project" value="UniProtKB-SubCell"/>
</dbReference>
<comment type="subcellular location">
    <subcellularLocation>
        <location evidence="3">Membrane</location>
        <topology evidence="3">Single-pass type I membrane protein</topology>
    </subcellularLocation>
</comment>
<comment type="sequence caution" evidence="3">
    <conflict type="erroneous gene model prediction">
        <sequence resource="EMBL-CDS" id="EDN59913"/>
    </conflict>
</comment>
<proteinExistence type="inferred from homology"/>
<sequence length="525" mass="58709">MLECLSALLVLFAGGGGSVLAAVQSKTVADPNLCPGYNSQLISPFLSSCKRNLSECVSRYFDEQYAFCRSCVTVNNETMEDLDNCKCLQCALSSLNNSCFHDYCTSKDEYDKLQIVVEQFQLTNGVLDDGEILKPRGNKFSSRKLSYFVGQNNTLFRNPLQFEKNQLISALLTSLTNNQKTISSVDMFEVVDANNEVQYLRKRTISGKTLSPATGYEEENDGDCSVKDKKWEGKIEYHENKKVSSENCSKDTDDKSGSKKERNTKAPLFHTATEIHMTRWSSWRPKKIFTRYLVNEYQSPKIITTVNRFYRTKTDTETGTTLITSTKAKRRWFPRTKIVTSTATSTFLSITTTTTTNAIATKSLVAVLNPDGLNKKAGINFGLFSANGELASPDEGGTPTVVRRDKISDPGAANEQATLFSTTFSQVPHLPELDSGEFISAASQLDKRIFIFTAITVSITTLMMLGFSYRSRVSFRDHSIDDSDDDNDWSDDEVEFDEEYFYSLPVSIPEKGISLDKMAQQLGVE</sequence>
<accession>A6ZZX0</accession>
<organism>
    <name type="scientific">Saccharomyces cerevisiae (strain YJM789)</name>
    <name type="common">Baker's yeast</name>
    <dbReference type="NCBI Taxonomy" id="307796"/>
    <lineage>
        <taxon>Eukaryota</taxon>
        <taxon>Fungi</taxon>
        <taxon>Dikarya</taxon>
        <taxon>Ascomycota</taxon>
        <taxon>Saccharomycotina</taxon>
        <taxon>Saccharomycetes</taxon>
        <taxon>Saccharomycetales</taxon>
        <taxon>Saccharomycetaceae</taxon>
        <taxon>Saccharomyces</taxon>
    </lineage>
</organism>
<reference key="1">
    <citation type="journal article" date="2007" name="Proc. Natl. Acad. Sci. U.S.A.">
        <title>Genome sequencing and comparative analysis of Saccharomyces cerevisiae strain YJM789.</title>
        <authorList>
            <person name="Wei W."/>
            <person name="McCusker J.H."/>
            <person name="Hyman R.W."/>
            <person name="Jones T."/>
            <person name="Ning Y."/>
            <person name="Cao Z."/>
            <person name="Gu Z."/>
            <person name="Bruno D."/>
            <person name="Miranda M."/>
            <person name="Nguyen M."/>
            <person name="Wilhelmy J."/>
            <person name="Komp C."/>
            <person name="Tamse R."/>
            <person name="Wang X."/>
            <person name="Jia P."/>
            <person name="Luedi P."/>
            <person name="Oefner P.J."/>
            <person name="David L."/>
            <person name="Dietrich F.S."/>
            <person name="Li Y."/>
            <person name="Davis R.W."/>
            <person name="Steinmetz L.M."/>
        </authorList>
    </citation>
    <scope>NUCLEOTIDE SEQUENCE [LARGE SCALE GENOMIC DNA]</scope>
    <source>
        <strain>YJM789</strain>
    </source>
</reference>
<gene>
    <name type="ORF">SCY_3380</name>
</gene>
<protein>
    <recommendedName>
        <fullName>Uncharacterized protein SCY_3380</fullName>
    </recommendedName>
</protein>
<evidence type="ECO:0000255" key="1"/>
<evidence type="ECO:0000256" key="2">
    <source>
        <dbReference type="SAM" id="MobiDB-lite"/>
    </source>
</evidence>
<evidence type="ECO:0000305" key="3"/>
<name>YKY5_YEAS7</name>
<keyword id="KW-0472">Membrane</keyword>
<keyword id="KW-0732">Signal</keyword>
<keyword id="KW-0812">Transmembrane</keyword>
<keyword id="KW-1133">Transmembrane helix</keyword>
<feature type="signal peptide" evidence="1">
    <location>
        <begin position="1"/>
        <end position="21"/>
    </location>
</feature>
<feature type="chain" id="PRO_0000378149" description="Uncharacterized protein SCY_3380">
    <location>
        <begin position="22"/>
        <end position="525"/>
    </location>
</feature>
<feature type="topological domain" description="Extracellular" evidence="1">
    <location>
        <begin position="22"/>
        <end position="448"/>
    </location>
</feature>
<feature type="transmembrane region" description="Helical" evidence="1">
    <location>
        <begin position="449"/>
        <end position="469"/>
    </location>
</feature>
<feature type="topological domain" description="Cytoplasmic" evidence="1">
    <location>
        <begin position="470"/>
        <end position="525"/>
    </location>
</feature>
<feature type="region of interest" description="Disordered" evidence="2">
    <location>
        <begin position="242"/>
        <end position="264"/>
    </location>
</feature>